<dbReference type="EMBL" id="Y00559">
    <property type="protein sequence ID" value="CAA68641.1"/>
    <property type="molecule type" value="Genomic_DNA"/>
</dbReference>
<dbReference type="PIR" id="S03097">
    <property type="entry name" value="S03097"/>
</dbReference>
<dbReference type="SMR" id="P09165"/>
<organism>
    <name type="scientific">Aeromonas sobria</name>
    <dbReference type="NCBI Taxonomy" id="646"/>
    <lineage>
        <taxon>Bacteria</taxon>
        <taxon>Pseudomonadati</taxon>
        <taxon>Pseudomonadota</taxon>
        <taxon>Gammaproteobacteria</taxon>
        <taxon>Aeromonadales</taxon>
        <taxon>Aeromonadaceae</taxon>
        <taxon>Aeromonas</taxon>
    </lineage>
</organism>
<comment type="function">
    <text>Regulation of the expression of aerolysin.</text>
</comment>
<evidence type="ECO:0000256" key="1">
    <source>
        <dbReference type="SAM" id="MobiDB-lite"/>
    </source>
</evidence>
<feature type="chain" id="PRO_0000064468" description="Aerolysin regulatory protein">
    <location>
        <begin position="1"/>
        <end position="61"/>
    </location>
</feature>
<feature type="region of interest" description="Disordered" evidence="1">
    <location>
        <begin position="1"/>
        <end position="61"/>
    </location>
</feature>
<feature type="compositionally biased region" description="Basic residues" evidence="1">
    <location>
        <begin position="1"/>
        <end position="14"/>
    </location>
</feature>
<feature type="compositionally biased region" description="Polar residues" evidence="1">
    <location>
        <begin position="51"/>
        <end position="61"/>
    </location>
</feature>
<protein>
    <recommendedName>
        <fullName>Aerolysin regulatory protein</fullName>
    </recommendedName>
</protein>
<gene>
    <name type="primary">aerC</name>
</gene>
<name>AERC_AERSO</name>
<accession>P09165</accession>
<sequence>MMIKRHLPQPRHRERPGALCGSGVPAPAARHPTAVPGGQDQFGSATHHGSDGQTHTGPQIR</sequence>
<proteinExistence type="predicted"/>
<reference key="1">
    <citation type="journal article" date="1988" name="Mol. Microbiol.">
        <title>Nucleotide sequence and transcriptional analysis of the aerCaerA region of Aeromonas sobria encoding aerolysin and its regulatory region.</title>
        <authorList>
            <person name="Husslein V."/>
            <person name="Huhle B."/>
            <person name="Jarchau T."/>
            <person name="Lurz R."/>
            <person name="Goebel W."/>
            <person name="Chakraborty T."/>
        </authorList>
    </citation>
    <scope>NUCLEOTIDE SEQUENCE [GENOMIC DNA]</scope>
    <source>
        <strain>AB3</strain>
    </source>
</reference>